<evidence type="ECO:0000256" key="1">
    <source>
        <dbReference type="SAM" id="MobiDB-lite"/>
    </source>
</evidence>
<evidence type="ECO:0000305" key="2"/>
<organismHost>
    <name type="scientific">Homo sapiens</name>
    <name type="common">Human</name>
    <dbReference type="NCBI Taxonomy" id="9606"/>
</organismHost>
<dbReference type="EMBL" id="M74082">
    <property type="protein sequence ID" value="AAA46839.1"/>
    <property type="status" value="ALT_SEQ"/>
    <property type="molecule type" value="Genomic_RNA"/>
</dbReference>
<dbReference type="PIR" id="D40234">
    <property type="entry name" value="MNNZ73"/>
</dbReference>
<dbReference type="SMR" id="P32534"/>
<dbReference type="GO" id="GO:0052170">
    <property type="term" value="P:symbiont-mediated suppression of host innate immune response"/>
    <property type="evidence" value="ECO:0007669"/>
    <property type="project" value="UniProtKB-KW"/>
</dbReference>
<dbReference type="GO" id="GO:0039563">
    <property type="term" value="P:symbiont-mediated suppression of host JAK-STAT cascade via inhibition of STAT1 activity"/>
    <property type="evidence" value="ECO:0000250"/>
    <property type="project" value="UniProtKB"/>
</dbReference>
<dbReference type="GO" id="GO:0039564">
    <property type="term" value="P:symbiont-mediated suppression of host JAK-STAT cascade via inhibition of STAT2 activity"/>
    <property type="evidence" value="ECO:0007669"/>
    <property type="project" value="UniProtKB-KW"/>
</dbReference>
<dbReference type="GO" id="GO:0039502">
    <property type="term" value="P:symbiont-mediated suppression of host type I interferon-mediated signaling pathway"/>
    <property type="evidence" value="ECO:0007669"/>
    <property type="project" value="UniProtKB-KW"/>
</dbReference>
<dbReference type="InterPro" id="IPR002608">
    <property type="entry name" value="Paramyxo_C"/>
</dbReference>
<dbReference type="Pfam" id="PF01692">
    <property type="entry name" value="Paramyxo_C"/>
    <property type="match status" value="1"/>
</dbReference>
<comment type="similarity">
    <text evidence="2">Belongs to the respirovirus protein C family.</text>
</comment>
<accession>P32534</accession>
<feature type="chain" id="PRO_0000142800" description="Protein C">
    <location>
        <begin position="1"/>
        <end position="204"/>
    </location>
</feature>
<feature type="region of interest" description="Disordered" evidence="1">
    <location>
        <begin position="1"/>
        <end position="78"/>
    </location>
</feature>
<feature type="compositionally biased region" description="Basic and acidic residues" evidence="1">
    <location>
        <begin position="10"/>
        <end position="20"/>
    </location>
</feature>
<feature type="compositionally biased region" description="Low complexity" evidence="1">
    <location>
        <begin position="25"/>
        <end position="34"/>
    </location>
</feature>
<keyword id="KW-0945">Host-virus interaction</keyword>
<keyword id="KW-1090">Inhibition of host innate immune response by virus</keyword>
<keyword id="KW-1114">Inhibition of host interferon signaling pathway by virus</keyword>
<keyword id="KW-1105">Inhibition of host STAT1 by virus</keyword>
<keyword id="KW-1106">Inhibition of host STAT2 by virus</keyword>
<keyword id="KW-0922">Interferon antiviral system evasion</keyword>
<keyword id="KW-0899">Viral immunoevasion</keyword>
<gene>
    <name type="primary">P/V/C</name>
</gene>
<sequence>MPSFLRGILKPKERHHENKNHSQMSSDSLTSSYPTSPPKLEKTEAGSIVSSTTQKKTSHHAKPTITTKTEQSQRRPKIIDQVRRVESLGEQVSQKQRHMLESLINKVYTGPLGEELVQTLYLRIWAMKETPESTKILQMREDIRDQYLRMKTERWLRTLIRGKKTKLRDFQKRYEEVHPYLMIERVEQIIMEEAWKLAAHIVQE</sequence>
<protein>
    <recommendedName>
        <fullName>Protein C</fullName>
    </recommendedName>
</protein>
<organism>
    <name type="scientific">Human parainfluenza 1 virus (strain CI-5/73)</name>
    <name type="common">HPIV-1</name>
    <dbReference type="NCBI Taxonomy" id="31607"/>
    <lineage>
        <taxon>Viruses</taxon>
        <taxon>Riboviria</taxon>
        <taxon>Orthornavirae</taxon>
        <taxon>Negarnaviricota</taxon>
        <taxon>Haploviricotina</taxon>
        <taxon>Monjiviricetes</taxon>
        <taxon>Mononegavirales</taxon>
        <taxon>Paramyxoviridae</taxon>
        <taxon>Feraresvirinae</taxon>
        <taxon>Respirovirus</taxon>
        <taxon>Respirovirus laryngotracheitidis</taxon>
    </lineage>
</organism>
<proteinExistence type="inferred from homology"/>
<reference key="1">
    <citation type="journal article" date="1992" name="Virology">
        <title>The P genes of human parainfluenza virus type 1 clinical isolates are polycistronic and microheterogeneous.</title>
        <authorList>
            <person name="Power U.F."/>
            <person name="Ryan K.W."/>
            <person name="Portner A."/>
        </authorList>
    </citation>
    <scope>NUCLEOTIDE SEQUENCE [GENOMIC RNA]</scope>
</reference>
<name>C_PI1HD</name>